<keyword id="KW-0342">GTP-binding</keyword>
<keyword id="KW-0547">Nucleotide-binding</keyword>
<keyword id="KW-0677">Repeat</keyword>
<keyword id="KW-0690">Ribosome biogenesis</keyword>
<name>DER_FRATF</name>
<proteinExistence type="inferred from homology"/>
<reference key="1">
    <citation type="journal article" date="2009" name="PLoS ONE">
        <title>Complete genome sequence of Francisella tularensis subspecies holarctica FTNF002-00.</title>
        <authorList>
            <person name="Barabote R.D."/>
            <person name="Xie G."/>
            <person name="Brettin T.S."/>
            <person name="Hinrichs S.H."/>
            <person name="Fey P.D."/>
            <person name="Jay J.J."/>
            <person name="Engle J.L."/>
            <person name="Godbole S.D."/>
            <person name="Noronha J.M."/>
            <person name="Scheuermann R.H."/>
            <person name="Zhou L.W."/>
            <person name="Lion C."/>
            <person name="Dempsey M.P."/>
        </authorList>
    </citation>
    <scope>NUCLEOTIDE SEQUENCE [LARGE SCALE GENOMIC DNA]</scope>
    <source>
        <strain>FTNF002-00 / FTA</strain>
    </source>
</reference>
<feature type="chain" id="PRO_1000011624" description="GTPase Der">
    <location>
        <begin position="1"/>
        <end position="465"/>
    </location>
</feature>
<feature type="domain" description="EngA-type G 1">
    <location>
        <begin position="3"/>
        <end position="166"/>
    </location>
</feature>
<feature type="domain" description="EngA-type G 2">
    <location>
        <begin position="184"/>
        <end position="358"/>
    </location>
</feature>
<feature type="domain" description="KH-like" evidence="1">
    <location>
        <begin position="359"/>
        <end position="443"/>
    </location>
</feature>
<feature type="region of interest" description="Disordered" evidence="2">
    <location>
        <begin position="446"/>
        <end position="465"/>
    </location>
</feature>
<feature type="binding site" evidence="1">
    <location>
        <begin position="9"/>
        <end position="16"/>
    </location>
    <ligand>
        <name>GTP</name>
        <dbReference type="ChEBI" id="CHEBI:37565"/>
        <label>1</label>
    </ligand>
</feature>
<feature type="binding site" evidence="1">
    <location>
        <begin position="56"/>
        <end position="60"/>
    </location>
    <ligand>
        <name>GTP</name>
        <dbReference type="ChEBI" id="CHEBI:37565"/>
        <label>1</label>
    </ligand>
</feature>
<feature type="binding site" evidence="1">
    <location>
        <begin position="118"/>
        <end position="121"/>
    </location>
    <ligand>
        <name>GTP</name>
        <dbReference type="ChEBI" id="CHEBI:37565"/>
        <label>1</label>
    </ligand>
</feature>
<feature type="binding site" evidence="1">
    <location>
        <begin position="190"/>
        <end position="197"/>
    </location>
    <ligand>
        <name>GTP</name>
        <dbReference type="ChEBI" id="CHEBI:37565"/>
        <label>2</label>
    </ligand>
</feature>
<feature type="binding site" evidence="1">
    <location>
        <begin position="237"/>
        <end position="241"/>
    </location>
    <ligand>
        <name>GTP</name>
        <dbReference type="ChEBI" id="CHEBI:37565"/>
        <label>2</label>
    </ligand>
</feature>
<feature type="binding site" evidence="1">
    <location>
        <begin position="302"/>
        <end position="305"/>
    </location>
    <ligand>
        <name>GTP</name>
        <dbReference type="ChEBI" id="CHEBI:37565"/>
        <label>2</label>
    </ligand>
</feature>
<dbReference type="EMBL" id="CP000803">
    <property type="protein sequence ID" value="ABU60914.1"/>
    <property type="molecule type" value="Genomic_DNA"/>
</dbReference>
<dbReference type="RefSeq" id="WP_003014664.1">
    <property type="nucleotide sequence ID" value="NC_009749.1"/>
</dbReference>
<dbReference type="SMR" id="A7NAB1"/>
<dbReference type="KEGG" id="fta:FTA_0437"/>
<dbReference type="HOGENOM" id="CLU_016077_6_2_6"/>
<dbReference type="GO" id="GO:0005525">
    <property type="term" value="F:GTP binding"/>
    <property type="evidence" value="ECO:0007669"/>
    <property type="project" value="UniProtKB-UniRule"/>
</dbReference>
<dbReference type="GO" id="GO:0043022">
    <property type="term" value="F:ribosome binding"/>
    <property type="evidence" value="ECO:0007669"/>
    <property type="project" value="TreeGrafter"/>
</dbReference>
<dbReference type="GO" id="GO:0042254">
    <property type="term" value="P:ribosome biogenesis"/>
    <property type="evidence" value="ECO:0007669"/>
    <property type="project" value="UniProtKB-KW"/>
</dbReference>
<dbReference type="CDD" id="cd01894">
    <property type="entry name" value="EngA1"/>
    <property type="match status" value="1"/>
</dbReference>
<dbReference type="CDD" id="cd01895">
    <property type="entry name" value="EngA2"/>
    <property type="match status" value="1"/>
</dbReference>
<dbReference type="FunFam" id="3.30.300.20:FF:000004">
    <property type="entry name" value="GTPase Der"/>
    <property type="match status" value="1"/>
</dbReference>
<dbReference type="FunFam" id="3.40.50.300:FF:000040">
    <property type="entry name" value="GTPase Der"/>
    <property type="match status" value="1"/>
</dbReference>
<dbReference type="FunFam" id="3.40.50.300:FF:000057">
    <property type="entry name" value="GTPase Der"/>
    <property type="match status" value="1"/>
</dbReference>
<dbReference type="Gene3D" id="3.30.300.20">
    <property type="match status" value="1"/>
</dbReference>
<dbReference type="Gene3D" id="3.40.50.300">
    <property type="entry name" value="P-loop containing nucleotide triphosphate hydrolases"/>
    <property type="match status" value="2"/>
</dbReference>
<dbReference type="HAMAP" id="MF_00195">
    <property type="entry name" value="GTPase_Der"/>
    <property type="match status" value="1"/>
</dbReference>
<dbReference type="InterPro" id="IPR031166">
    <property type="entry name" value="G_ENGA"/>
</dbReference>
<dbReference type="InterPro" id="IPR006073">
    <property type="entry name" value="GTP-bd"/>
</dbReference>
<dbReference type="InterPro" id="IPR016484">
    <property type="entry name" value="GTPase_Der"/>
</dbReference>
<dbReference type="InterPro" id="IPR032859">
    <property type="entry name" value="KH_dom-like"/>
</dbReference>
<dbReference type="InterPro" id="IPR015946">
    <property type="entry name" value="KH_dom-like_a/b"/>
</dbReference>
<dbReference type="InterPro" id="IPR027417">
    <property type="entry name" value="P-loop_NTPase"/>
</dbReference>
<dbReference type="InterPro" id="IPR005225">
    <property type="entry name" value="Small_GTP-bd"/>
</dbReference>
<dbReference type="NCBIfam" id="TIGR03594">
    <property type="entry name" value="GTPase_EngA"/>
    <property type="match status" value="1"/>
</dbReference>
<dbReference type="NCBIfam" id="TIGR00231">
    <property type="entry name" value="small_GTP"/>
    <property type="match status" value="2"/>
</dbReference>
<dbReference type="PANTHER" id="PTHR43834">
    <property type="entry name" value="GTPASE DER"/>
    <property type="match status" value="1"/>
</dbReference>
<dbReference type="PANTHER" id="PTHR43834:SF6">
    <property type="entry name" value="GTPASE DER"/>
    <property type="match status" value="1"/>
</dbReference>
<dbReference type="Pfam" id="PF14714">
    <property type="entry name" value="KH_dom-like"/>
    <property type="match status" value="1"/>
</dbReference>
<dbReference type="Pfam" id="PF01926">
    <property type="entry name" value="MMR_HSR1"/>
    <property type="match status" value="2"/>
</dbReference>
<dbReference type="PIRSF" id="PIRSF006485">
    <property type="entry name" value="GTP-binding_EngA"/>
    <property type="match status" value="1"/>
</dbReference>
<dbReference type="PRINTS" id="PR00326">
    <property type="entry name" value="GTP1OBG"/>
</dbReference>
<dbReference type="SUPFAM" id="SSF52540">
    <property type="entry name" value="P-loop containing nucleoside triphosphate hydrolases"/>
    <property type="match status" value="2"/>
</dbReference>
<dbReference type="PROSITE" id="PS51712">
    <property type="entry name" value="G_ENGA"/>
    <property type="match status" value="2"/>
</dbReference>
<organism>
    <name type="scientific">Francisella tularensis subsp. holarctica (strain FTNF002-00 / FTA)</name>
    <dbReference type="NCBI Taxonomy" id="458234"/>
    <lineage>
        <taxon>Bacteria</taxon>
        <taxon>Pseudomonadati</taxon>
        <taxon>Pseudomonadota</taxon>
        <taxon>Gammaproteobacteria</taxon>
        <taxon>Thiotrichales</taxon>
        <taxon>Francisellaceae</taxon>
        <taxon>Francisella</taxon>
    </lineage>
</organism>
<protein>
    <recommendedName>
        <fullName evidence="1">GTPase Der</fullName>
    </recommendedName>
    <alternativeName>
        <fullName evidence="1">GTP-binding protein EngA</fullName>
    </alternativeName>
</protein>
<gene>
    <name evidence="1" type="primary">der</name>
    <name type="synonym">engA</name>
    <name type="ordered locus">FTA_0437</name>
</gene>
<sequence length="465" mass="52469">MSFLVAIVGRANVGKSTLFNVLTNSHDALVFDFEGVTRDRQYGQAKYDDLDYLVVDTGGISDKDVGFDEFMAKQSQIAIDEANLVFFVVDGRSGLTTGDEYVASLLRQKDKKVVVVVNKVDGTDEEAAMAEFYSFGFDKVFAISAAHRRNTQKLVDKFLKKPLNEYYQDYTQTQEHKEQQRHGIHFSLIGRPNVGKSTLTNRMLGEDRVVVFDMPGTTIDSVSIPFERHGQKYTIVDTAGVRKRGKVKQTLEKFSVIKTLQAIQDSNVVVAVVDARQGISDQDLSLIHFAIKNGRALVLAVNKWDGMTEEDRIQVKQDLKRKLFFLQDYVDIHFISALYGTNVGHVFESIDTAYACANKKITTADATRLMQLAVEAHSPPMVGKFRIKLKYAHVGGHNPPVIVIHGNQVSRLPNSYKRYLENFFREALDFRGTPIVFEFKQSENPFADRKNKRSKDEGSKSKKVK</sequence>
<comment type="function">
    <text evidence="1">GTPase that plays an essential role in the late steps of ribosome biogenesis.</text>
</comment>
<comment type="subunit">
    <text evidence="1">Associates with the 50S ribosomal subunit.</text>
</comment>
<comment type="similarity">
    <text evidence="1">Belongs to the TRAFAC class TrmE-Era-EngA-EngB-Septin-like GTPase superfamily. EngA (Der) GTPase family.</text>
</comment>
<evidence type="ECO:0000255" key="1">
    <source>
        <dbReference type="HAMAP-Rule" id="MF_00195"/>
    </source>
</evidence>
<evidence type="ECO:0000256" key="2">
    <source>
        <dbReference type="SAM" id="MobiDB-lite"/>
    </source>
</evidence>
<accession>A7NAB1</accession>